<gene>
    <name evidence="1" type="primary">trmA</name>
    <name type="ordered locus">Sbal_4178</name>
</gene>
<sequence length="365" mass="42013">MNLAAMDPQTYDTQLEHKRIKLEQAFAQFETPSVEVFASEPANYRMRAEFRMWHDGDDLYYYMFDKVLNEKVRCDQYLPASVLINQMMSALIAELKPNPSLRHKLFQVDFLSTLSGEILVSLLYHRQLDDQWRADATALKAKLSSQFNVNIIGRARKQKIDLDKDFVVESLQVNDKTFLYKQIENSFTQPNAKVSVKMLEWAIDATQNSQGDLLELYCGNGNFSIALAQNFNRVLATELAKPSVDAAQYNIEVNGIENLQIIRMSAEDFSDAMAKKRSFRRLEGIDLDSYVCNTIFVDPPRAGIDPDTLALVQGYERILYISCNPETLKDNLQQLNETHKVTRFALFDQFPYTDHMETGVLLERR</sequence>
<name>TRMA_SHEB5</name>
<reference key="1">
    <citation type="submission" date="2007-02" db="EMBL/GenBank/DDBJ databases">
        <title>Complete sequence of chromosome of Shewanella baltica OS155.</title>
        <authorList>
            <consortium name="US DOE Joint Genome Institute"/>
            <person name="Copeland A."/>
            <person name="Lucas S."/>
            <person name="Lapidus A."/>
            <person name="Barry K."/>
            <person name="Detter J.C."/>
            <person name="Glavina del Rio T."/>
            <person name="Hammon N."/>
            <person name="Israni S."/>
            <person name="Dalin E."/>
            <person name="Tice H."/>
            <person name="Pitluck S."/>
            <person name="Sims D.R."/>
            <person name="Brettin T."/>
            <person name="Bruce D."/>
            <person name="Han C."/>
            <person name="Tapia R."/>
            <person name="Brainard J."/>
            <person name="Schmutz J."/>
            <person name="Larimer F."/>
            <person name="Land M."/>
            <person name="Hauser L."/>
            <person name="Kyrpides N."/>
            <person name="Mikhailova N."/>
            <person name="Brettar I."/>
            <person name="Klappenbach J."/>
            <person name="Konstantinidis K."/>
            <person name="Rodrigues J."/>
            <person name="Tiedje J."/>
            <person name="Richardson P."/>
        </authorList>
    </citation>
    <scope>NUCLEOTIDE SEQUENCE [LARGE SCALE GENOMIC DNA]</scope>
    <source>
        <strain>OS155 / ATCC BAA-1091</strain>
    </source>
</reference>
<keyword id="KW-0489">Methyltransferase</keyword>
<keyword id="KW-1185">Reference proteome</keyword>
<keyword id="KW-0949">S-adenosyl-L-methionine</keyword>
<keyword id="KW-0808">Transferase</keyword>
<keyword id="KW-0819">tRNA processing</keyword>
<protein>
    <recommendedName>
        <fullName evidence="1">tRNA/tmRNA (uracil-C(5))-methyltransferase</fullName>
        <ecNumber evidence="1">2.1.1.-</ecNumber>
        <ecNumber evidence="1">2.1.1.35</ecNumber>
    </recommendedName>
    <alternativeName>
        <fullName evidence="1">tRNA (uracil(54)-C(5))-methyltransferase</fullName>
    </alternativeName>
    <alternativeName>
        <fullName evidence="1">tRNA(m5U54)-methyltransferase</fullName>
        <shortName evidence="1">RUMT</shortName>
    </alternativeName>
    <alternativeName>
        <fullName evidence="1">tmRNA (uracil(341)-C(5))-methyltransferase</fullName>
    </alternativeName>
</protein>
<evidence type="ECO:0000255" key="1">
    <source>
        <dbReference type="HAMAP-Rule" id="MF_01011"/>
    </source>
</evidence>
<proteinExistence type="inferred from homology"/>
<feature type="chain" id="PRO_1000072912" description="tRNA/tmRNA (uracil-C(5))-methyltransferase">
    <location>
        <begin position="1"/>
        <end position="365"/>
    </location>
</feature>
<feature type="active site" description="Nucleophile" evidence="1">
    <location>
        <position position="323"/>
    </location>
</feature>
<feature type="active site" description="Proton acceptor" evidence="1">
    <location>
        <position position="357"/>
    </location>
</feature>
<feature type="binding site" evidence="1">
    <location>
        <position position="189"/>
    </location>
    <ligand>
        <name>S-adenosyl-L-methionine</name>
        <dbReference type="ChEBI" id="CHEBI:59789"/>
    </ligand>
</feature>
<feature type="binding site" evidence="1">
    <location>
        <position position="217"/>
    </location>
    <ligand>
        <name>S-adenosyl-L-methionine</name>
        <dbReference type="ChEBI" id="CHEBI:59789"/>
    </ligand>
</feature>
<feature type="binding site" evidence="1">
    <location>
        <position position="222"/>
    </location>
    <ligand>
        <name>S-adenosyl-L-methionine</name>
        <dbReference type="ChEBI" id="CHEBI:59789"/>
    </ligand>
</feature>
<feature type="binding site" evidence="1">
    <location>
        <position position="238"/>
    </location>
    <ligand>
        <name>S-adenosyl-L-methionine</name>
        <dbReference type="ChEBI" id="CHEBI:59789"/>
    </ligand>
</feature>
<feature type="binding site" evidence="1">
    <location>
        <position position="298"/>
    </location>
    <ligand>
        <name>S-adenosyl-L-methionine</name>
        <dbReference type="ChEBI" id="CHEBI:59789"/>
    </ligand>
</feature>
<dbReference type="EC" id="2.1.1.-" evidence="1"/>
<dbReference type="EC" id="2.1.1.35" evidence="1"/>
<dbReference type="EMBL" id="CP000563">
    <property type="protein sequence ID" value="ABN63643.1"/>
    <property type="molecule type" value="Genomic_DNA"/>
</dbReference>
<dbReference type="RefSeq" id="WP_011848155.1">
    <property type="nucleotide sequence ID" value="NC_009052.1"/>
</dbReference>
<dbReference type="SMR" id="A3DA80"/>
<dbReference type="STRING" id="325240.Sbal_4178"/>
<dbReference type="GeneID" id="11770534"/>
<dbReference type="KEGG" id="sbl:Sbal_4178"/>
<dbReference type="HOGENOM" id="CLU_043022_0_0_6"/>
<dbReference type="OrthoDB" id="9804590at2"/>
<dbReference type="Proteomes" id="UP000001557">
    <property type="component" value="Chromosome"/>
</dbReference>
<dbReference type="GO" id="GO:0005829">
    <property type="term" value="C:cytosol"/>
    <property type="evidence" value="ECO:0007669"/>
    <property type="project" value="TreeGrafter"/>
</dbReference>
<dbReference type="GO" id="GO:0019843">
    <property type="term" value="F:rRNA binding"/>
    <property type="evidence" value="ECO:0007669"/>
    <property type="project" value="TreeGrafter"/>
</dbReference>
<dbReference type="GO" id="GO:0030697">
    <property type="term" value="F:tRNA (uracil(54)-C5)-methyltransferase activity, S-adenosyl methionine-dependent"/>
    <property type="evidence" value="ECO:0007669"/>
    <property type="project" value="UniProtKB-UniRule"/>
</dbReference>
<dbReference type="GO" id="GO:0000049">
    <property type="term" value="F:tRNA binding"/>
    <property type="evidence" value="ECO:0007669"/>
    <property type="project" value="TreeGrafter"/>
</dbReference>
<dbReference type="GO" id="GO:0030488">
    <property type="term" value="P:tRNA methylation"/>
    <property type="evidence" value="ECO:0007669"/>
    <property type="project" value="UniProtKB-UniRule"/>
</dbReference>
<dbReference type="CDD" id="cd02440">
    <property type="entry name" value="AdoMet_MTases"/>
    <property type="match status" value="1"/>
</dbReference>
<dbReference type="FunFam" id="2.40.50.1070:FF:000001">
    <property type="entry name" value="tRNA/tmRNA (uracil-C(5))-methyltransferase"/>
    <property type="match status" value="1"/>
</dbReference>
<dbReference type="FunFam" id="3.40.50.150:FF:000012">
    <property type="entry name" value="tRNA/tmRNA (uracil-C(5))-methyltransferase"/>
    <property type="match status" value="1"/>
</dbReference>
<dbReference type="Gene3D" id="2.40.50.1070">
    <property type="match status" value="1"/>
</dbReference>
<dbReference type="Gene3D" id="3.40.50.150">
    <property type="entry name" value="Vaccinia Virus protein VP39"/>
    <property type="match status" value="1"/>
</dbReference>
<dbReference type="HAMAP" id="MF_01011">
    <property type="entry name" value="RNA_methyltr_TrmA"/>
    <property type="match status" value="1"/>
</dbReference>
<dbReference type="InterPro" id="IPR030390">
    <property type="entry name" value="MeTrfase_TrmA_AS"/>
</dbReference>
<dbReference type="InterPro" id="IPR030391">
    <property type="entry name" value="MeTrfase_TrmA_CS"/>
</dbReference>
<dbReference type="InterPro" id="IPR029063">
    <property type="entry name" value="SAM-dependent_MTases_sf"/>
</dbReference>
<dbReference type="InterPro" id="IPR011869">
    <property type="entry name" value="TrmA_MeTrfase"/>
</dbReference>
<dbReference type="InterPro" id="IPR010280">
    <property type="entry name" value="U5_MeTrfase_fam"/>
</dbReference>
<dbReference type="NCBIfam" id="TIGR02143">
    <property type="entry name" value="trmA_only"/>
    <property type="match status" value="1"/>
</dbReference>
<dbReference type="PANTHER" id="PTHR47790">
    <property type="entry name" value="TRNA/TMRNA (URACIL-C(5))-METHYLTRANSFERASE"/>
    <property type="match status" value="1"/>
</dbReference>
<dbReference type="PANTHER" id="PTHR47790:SF2">
    <property type="entry name" value="TRNA_TMRNA (URACIL-C(5))-METHYLTRANSFERASE"/>
    <property type="match status" value="1"/>
</dbReference>
<dbReference type="Pfam" id="PF05958">
    <property type="entry name" value="tRNA_U5-meth_tr"/>
    <property type="match status" value="1"/>
</dbReference>
<dbReference type="SUPFAM" id="SSF53335">
    <property type="entry name" value="S-adenosyl-L-methionine-dependent methyltransferases"/>
    <property type="match status" value="1"/>
</dbReference>
<dbReference type="PROSITE" id="PS51687">
    <property type="entry name" value="SAM_MT_RNA_M5U"/>
    <property type="match status" value="1"/>
</dbReference>
<dbReference type="PROSITE" id="PS01230">
    <property type="entry name" value="TRMA_1"/>
    <property type="match status" value="1"/>
</dbReference>
<dbReference type="PROSITE" id="PS01231">
    <property type="entry name" value="TRMA_2"/>
    <property type="match status" value="1"/>
</dbReference>
<comment type="function">
    <text evidence="1">Dual-specificity methyltransferase that catalyzes the formation of 5-methyluridine at position 54 (m5U54) in all tRNAs, and that of position 341 (m5U341) in tmRNA (transfer-mRNA).</text>
</comment>
<comment type="catalytic activity">
    <reaction evidence="1">
        <text>uridine(54) in tRNA + S-adenosyl-L-methionine = 5-methyluridine(54) in tRNA + S-adenosyl-L-homocysteine + H(+)</text>
        <dbReference type="Rhea" id="RHEA:42712"/>
        <dbReference type="Rhea" id="RHEA-COMP:10167"/>
        <dbReference type="Rhea" id="RHEA-COMP:10193"/>
        <dbReference type="ChEBI" id="CHEBI:15378"/>
        <dbReference type="ChEBI" id="CHEBI:57856"/>
        <dbReference type="ChEBI" id="CHEBI:59789"/>
        <dbReference type="ChEBI" id="CHEBI:65315"/>
        <dbReference type="ChEBI" id="CHEBI:74447"/>
        <dbReference type="EC" id="2.1.1.35"/>
    </reaction>
</comment>
<comment type="catalytic activity">
    <reaction evidence="1">
        <text>uridine(341) in tmRNA + S-adenosyl-L-methionine = 5-methyluridine(341) in tmRNA + S-adenosyl-L-homocysteine + H(+)</text>
        <dbReference type="Rhea" id="RHEA:43612"/>
        <dbReference type="Rhea" id="RHEA-COMP:10630"/>
        <dbReference type="Rhea" id="RHEA-COMP:10631"/>
        <dbReference type="ChEBI" id="CHEBI:15378"/>
        <dbReference type="ChEBI" id="CHEBI:57856"/>
        <dbReference type="ChEBI" id="CHEBI:59789"/>
        <dbReference type="ChEBI" id="CHEBI:65315"/>
        <dbReference type="ChEBI" id="CHEBI:74447"/>
    </reaction>
</comment>
<comment type="similarity">
    <text evidence="1">Belongs to the class I-like SAM-binding methyltransferase superfamily. RNA M5U methyltransferase family. TrmA subfamily.</text>
</comment>
<organism>
    <name type="scientific">Shewanella baltica (strain OS155 / ATCC BAA-1091)</name>
    <dbReference type="NCBI Taxonomy" id="325240"/>
    <lineage>
        <taxon>Bacteria</taxon>
        <taxon>Pseudomonadati</taxon>
        <taxon>Pseudomonadota</taxon>
        <taxon>Gammaproteobacteria</taxon>
        <taxon>Alteromonadales</taxon>
        <taxon>Shewanellaceae</taxon>
        <taxon>Shewanella</taxon>
    </lineage>
</organism>
<accession>A3DA80</accession>